<proteinExistence type="evidence at protein level"/>
<feature type="chain" id="PRO_0000071168" description="Capsid protein 1">
    <location>
        <begin position="1"/>
        <end position="593"/>
    </location>
</feature>
<comment type="subcellular location">
    <subcellularLocation>
        <location evidence="1">Virion</location>
    </subcellularLocation>
</comment>
<comment type="similarity">
    <text evidence="2">Belongs to the NCLDV major capsid protein family.</text>
</comment>
<comment type="sequence caution" evidence="2">
    <conflict type="erroneous gene model prediction">
        <sequence resource="EMBL-CDS" id="AAV50694"/>
    </conflict>
</comment>
<sequence>MAGGLLQLVAYGAQDVYLTGNPMITFFKVVYRRHTNFAVESIEQFFGGNLGFGKKSSAEINRSGDLITQVFLKVTLPEVRYCGDFTNFGHVEFAWVRNIGHAIVEETELEIGGSPIDKHYGDWLQIWQDVSSSKDHEKGLAKMLGDVPELTSISTLSWDVPDNTVLKPSYTLYVPLQFYFNRNNGLALPLIALQYHQVRIYVKFRQADQCYIASDAFKSGCGNLQLDDVSLYVNYVFLDTEERRRFAQVSHEYLIEQLQFTGEESAGSSNSAKYKLNFNHPVKAIYWVTKLGNYQGGKFMTYDPVCWENARENAAKLLLLAQYDLDDWGYFQEPGGYECEGNDGRSYVGDCGVQYTAVDPSNPSEEPSYIFNDTTTAEAFDGSLLIGKLAPCVPLLKRNKDVDLKDKVEGIIRIHTDFENDRMKYPEVEKITRNDLTLHDLSVPISKYDVDNRVDYIKKFDVTVWQHNNFGLLIDGSGNPTHEAELQLNGQPRQSKRGGIWYDTVNPTVHHTKSPRDGVNVFSFALNPEEHQPSCTCNFSRIDTAQLNLWFQHFTNHKFADVFADNDNKVLIFAVNYNVLRMLSGMAGLAYSN</sequence>
<accession>Q5UQL7</accession>
<dbReference type="EMBL" id="AY653733">
    <property type="protein sequence ID" value="AAV50694.1"/>
    <property type="status" value="ALT_SEQ"/>
    <property type="molecule type" value="Genomic_DNA"/>
</dbReference>
<dbReference type="SMR" id="Q5UQL7"/>
<dbReference type="KEGG" id="vg:9925046"/>
<dbReference type="OrthoDB" id="5765at10239"/>
<dbReference type="Proteomes" id="UP000001134">
    <property type="component" value="Genome"/>
</dbReference>
<dbReference type="GO" id="GO:0019028">
    <property type="term" value="C:viral capsid"/>
    <property type="evidence" value="ECO:0007669"/>
    <property type="project" value="UniProtKB-KW"/>
</dbReference>
<dbReference type="GO" id="GO:0005198">
    <property type="term" value="F:structural molecule activity"/>
    <property type="evidence" value="ECO:0007669"/>
    <property type="project" value="InterPro"/>
</dbReference>
<dbReference type="Gene3D" id="2.70.9.10">
    <property type="entry name" value="Adenovirus Type 2 Hexon, domain 4"/>
    <property type="match status" value="1"/>
</dbReference>
<dbReference type="Gene3D" id="2.70.9.20">
    <property type="entry name" value="Major capsid protein Vp54"/>
    <property type="match status" value="2"/>
</dbReference>
<dbReference type="InterPro" id="IPR031654">
    <property type="entry name" value="Capsid_N"/>
</dbReference>
<dbReference type="InterPro" id="IPR007542">
    <property type="entry name" value="MCP_C"/>
</dbReference>
<dbReference type="InterPro" id="IPR038519">
    <property type="entry name" value="MCP_C_sf"/>
</dbReference>
<dbReference type="InterPro" id="IPR016112">
    <property type="entry name" value="VP_dsDNA_II"/>
</dbReference>
<dbReference type="Pfam" id="PF16903">
    <property type="entry name" value="Capsid_N"/>
    <property type="match status" value="1"/>
</dbReference>
<dbReference type="Pfam" id="PF04451">
    <property type="entry name" value="Capsid_NCLDV"/>
    <property type="match status" value="1"/>
</dbReference>
<dbReference type="SUPFAM" id="SSF49749">
    <property type="entry name" value="Group II dsDNA viruses VP"/>
    <property type="match status" value="3"/>
</dbReference>
<evidence type="ECO:0000269" key="1">
    <source>
    </source>
</evidence>
<evidence type="ECO:0000305" key="2"/>
<reference key="1">
    <citation type="journal article" date="2004" name="Science">
        <title>The 1.2-megabase genome sequence of Mimivirus.</title>
        <authorList>
            <person name="Raoult D."/>
            <person name="Audic S."/>
            <person name="Robert C."/>
            <person name="Abergel C."/>
            <person name="Renesto P."/>
            <person name="Ogata H."/>
            <person name="La Scola B."/>
            <person name="Susan M."/>
            <person name="Claverie J.-M."/>
        </authorList>
    </citation>
    <scope>NUCLEOTIDE SEQUENCE [LARGE SCALE GENOMIC DNA]</scope>
    <source>
        <strain>Rowbotham-Bradford</strain>
    </source>
</reference>
<reference key="2">
    <citation type="journal article" date="2006" name="J. Virol.">
        <title>Mimivirus giant particles incorporate a large fraction of anonymous and unique gene products.</title>
        <authorList>
            <person name="Renesto P."/>
            <person name="Abergel C."/>
            <person name="Decloquement P."/>
            <person name="Moinier D."/>
            <person name="Azza S."/>
            <person name="Ogata H."/>
            <person name="Fourquet P."/>
            <person name="Gorvel J.-P."/>
            <person name="Claverie J.-M."/>
            <person name="Raoult D."/>
        </authorList>
    </citation>
    <scope>IDENTIFICATION BY MASS SPECTROMETRY [LARGE SCALE ANALYSIS]</scope>
    <scope>SUBCELLULAR LOCATION</scope>
    <source>
        <strain>Rowbotham-Bradford</strain>
    </source>
</reference>
<reference key="3">
    <citation type="submission" date="2006-12" db="UniProtKB">
        <authorList>
            <person name="Suhre K."/>
            <person name="Abergel C."/>
            <person name="Ogata H."/>
            <person name="Claverie J.-M."/>
        </authorList>
    </citation>
    <scope>REVISION OF GENE MODEL</scope>
    <scope>IDENTIFICATION BY MASS SPECTROMETRY</scope>
    <source>
        <strain>Rowbotham-Bradford</strain>
    </source>
</reference>
<reference key="4">
    <citation type="journal article" date="2009" name="BMC Mol. Biol.">
        <title>Revised Mimivirus major capsid protein sequence reveals intron-containing gene structure and extra domain.</title>
        <authorList>
            <person name="Azza S."/>
            <person name="Cambillau C."/>
            <person name="Raoult D."/>
            <person name="Suzan-Monti M."/>
        </authorList>
    </citation>
    <scope>CHARACTERIZATION</scope>
    <source>
        <strain>Rowbotham-Bradford</strain>
    </source>
</reference>
<gene>
    <name type="ordered locus">MIMI_L425</name>
</gene>
<keyword id="KW-0167">Capsid protein</keyword>
<keyword id="KW-1185">Reference proteome</keyword>
<keyword id="KW-0946">Virion</keyword>
<name>CAPS1_MIMIV</name>
<organism>
    <name type="scientific">Acanthamoeba polyphaga mimivirus</name>
    <name type="common">APMV</name>
    <dbReference type="NCBI Taxonomy" id="212035"/>
    <lineage>
        <taxon>Viruses</taxon>
        <taxon>Varidnaviria</taxon>
        <taxon>Bamfordvirae</taxon>
        <taxon>Nucleocytoviricota</taxon>
        <taxon>Megaviricetes</taxon>
        <taxon>Imitervirales</taxon>
        <taxon>Mimiviridae</taxon>
        <taxon>Megamimivirinae</taxon>
        <taxon>Mimivirus</taxon>
        <taxon>Mimivirus bradfordmassiliense</taxon>
    </lineage>
</organism>
<protein>
    <recommendedName>
        <fullName>Capsid protein 1</fullName>
    </recommendedName>
    <alternativeName>
        <fullName>Capsid protein D13L</fullName>
    </alternativeName>
</protein>
<organismHost>
    <name type="scientific">Acanthamoeba polyphaga</name>
    <name type="common">Amoeba</name>
    <dbReference type="NCBI Taxonomy" id="5757"/>
</organismHost>